<feature type="chain" id="PRO_0000363641" description="Cytochrome c biogenesis protein Ccs1">
    <location>
        <begin position="1"/>
        <end position="441"/>
    </location>
</feature>
<feature type="transmembrane region" description="Helical" evidence="1">
    <location>
        <begin position="19"/>
        <end position="39"/>
    </location>
</feature>
<feature type="transmembrane region" description="Helical" evidence="1">
    <location>
        <begin position="78"/>
        <end position="98"/>
    </location>
</feature>
<feature type="transmembrane region" description="Helical" evidence="1">
    <location>
        <begin position="164"/>
        <end position="184"/>
    </location>
</feature>
<name>CCS1_RHDSA</name>
<sequence length="441" mass="49475">MLIKINQYFRKSISVLGNLKLAIILLLMLALFSAFGTVIEQNQNVAFYENSYPNSAPLFGFLSANAILFLGLNNIYQTWWFTTLILLLAVSLFSCTLARQIPSLKMARLWQFYTKDQSLKKIGLSFNLQKTSLSKLAFTLKTDDYNVIQKGRFLYAYKGLPGKIGPIIVHASLIIILFGALLGNLSGFVSQELVPLGGVFHIQNIINSGTLSYVPQNFEGYVKDFKIAYNDEGSIDQFYSDLSILNSTGEEVRSKTIYVNEPLRYEGIVFYQTDWSITNLAINVDQQTNIQLPLKSINVKGEGKFWIASLPIANVEKATNDNILLVLEDLTGKILLYSSNQQLLAIVNVGENISLNGHSVKVTDIISSTGLQIKSDPGIPFVYIGFFLLMLSITLSYFSYSQVWAIKDNKTLYVSGRTNRAIYSFEQQITKMMNKLNSTYA</sequence>
<evidence type="ECO:0000255" key="1">
    <source>
        <dbReference type="HAMAP-Rule" id="MF_01392"/>
    </source>
</evidence>
<keyword id="KW-0150">Chloroplast</keyword>
<keyword id="KW-0201">Cytochrome c-type biogenesis</keyword>
<keyword id="KW-0472">Membrane</keyword>
<keyword id="KW-0934">Plastid</keyword>
<keyword id="KW-0793">Thylakoid</keyword>
<keyword id="KW-0812">Transmembrane</keyword>
<keyword id="KW-1133">Transmembrane helix</keyword>
<comment type="function">
    <text evidence="1">Required during biogenesis of c-type cytochromes (cytochrome c6 and cytochrome f) at the step of heme attachment.</text>
</comment>
<comment type="subunit">
    <text evidence="1">May interact with CcsA.</text>
</comment>
<comment type="subcellular location">
    <subcellularLocation>
        <location evidence="1">Plastid</location>
        <location evidence="1">Chloroplast thylakoid membrane</location>
        <topology evidence="1">Multi-pass membrane protein</topology>
    </subcellularLocation>
</comment>
<comment type="similarity">
    <text evidence="1">Belongs to the Ccs1/CcsB family.</text>
</comment>
<geneLocation type="chloroplast"/>
<reference key="1">
    <citation type="journal article" date="2007" name="Mol. Biol. Evol.">
        <title>Plastid genome sequence of the cryptophyte alga Rhodomonas salina CCMP1319: lateral transfer of putative DNA replication machinery and a test of chromist plastid phylogeny.</title>
        <authorList>
            <person name="Khan H."/>
            <person name="Parks N."/>
            <person name="Kozera C."/>
            <person name="Curtis B.A."/>
            <person name="Parsons B.J."/>
            <person name="Bowman S."/>
            <person name="Archibald J.M."/>
        </authorList>
    </citation>
    <scope>NUCLEOTIDE SEQUENCE [LARGE SCALE GENOMIC DNA]</scope>
    <source>
        <strain>CCMP1319 / NEPCC76 / CS-174</strain>
    </source>
</reference>
<proteinExistence type="inferred from homology"/>
<organism>
    <name type="scientific">Rhodomonas salina</name>
    <name type="common">Cryptomonas salina</name>
    <dbReference type="NCBI Taxonomy" id="52970"/>
    <lineage>
        <taxon>Eukaryota</taxon>
        <taxon>Cryptophyceae</taxon>
        <taxon>Pyrenomonadales</taxon>
        <taxon>Pyrenomonadaceae</taxon>
        <taxon>Rhodomonas</taxon>
    </lineage>
</organism>
<accession>A6MVS2</accession>
<gene>
    <name evidence="1" type="primary">ccs1</name>
</gene>
<protein>
    <recommendedName>
        <fullName evidence="1">Cytochrome c biogenesis protein Ccs1</fullName>
    </recommendedName>
</protein>
<dbReference type="EMBL" id="EF508371">
    <property type="protein sequence ID" value="ABO70849.1"/>
    <property type="molecule type" value="Genomic_DNA"/>
</dbReference>
<dbReference type="RefSeq" id="YP_001293501.1">
    <property type="nucleotide sequence ID" value="NC_009573.1"/>
</dbReference>
<dbReference type="GeneID" id="5228621"/>
<dbReference type="GO" id="GO:0009535">
    <property type="term" value="C:chloroplast thylakoid membrane"/>
    <property type="evidence" value="ECO:0007669"/>
    <property type="project" value="UniProtKB-SubCell"/>
</dbReference>
<dbReference type="GO" id="GO:0017004">
    <property type="term" value="P:cytochrome complex assembly"/>
    <property type="evidence" value="ECO:0007669"/>
    <property type="project" value="UniProtKB-UniRule"/>
</dbReference>
<dbReference type="HAMAP" id="MF_01392">
    <property type="entry name" value="CytC_Ccs1"/>
    <property type="match status" value="1"/>
</dbReference>
<dbReference type="InterPro" id="IPR023494">
    <property type="entry name" value="Cyt_c_bgen_Ccs1/CcsB/ResB"/>
</dbReference>
<dbReference type="InterPro" id="IPR007816">
    <property type="entry name" value="ResB-like_domain"/>
</dbReference>
<dbReference type="PANTHER" id="PTHR31566">
    <property type="entry name" value="CYTOCHROME C BIOGENESIS PROTEIN CCS1, CHLOROPLASTIC"/>
    <property type="match status" value="1"/>
</dbReference>
<dbReference type="PANTHER" id="PTHR31566:SF0">
    <property type="entry name" value="CYTOCHROME C BIOGENESIS PROTEIN CCS1, CHLOROPLASTIC"/>
    <property type="match status" value="1"/>
</dbReference>
<dbReference type="Pfam" id="PF05140">
    <property type="entry name" value="ResB"/>
    <property type="match status" value="2"/>
</dbReference>